<sequence length="2211" mass="242555">MASHAEPTRLFLFGDQTYDFVADLRDLLNIRNNPILVAFLEQSHHVIRAQMIRELPPKEHKQARTASLAELLQKYVDRKLPSAFQTALSCVTQIGLFMRQFDDPRVLYPHANDSYVLGVCTGSLAAAAISCSTSLSELLPIAVQTVLVAFRLGLWAEKVRDNLEISETNQTQPWSAVCHVPPEEVAIAIDRFSHKKVRSPVYRAQRPWITATSAKTTTVSASPDILSQLASQAPFTNSKLWREIPIYVPAHNNHLFSSRDVDDILATTNENPWSTFGAQIPFLSSVTGKLAWVRNYRDLLHLALSQCLIEPIRWDVVEAEVPRLLKDRDGLDTLTIVAFTTVLSKSLSNALVTEGIKPAEPPTSINKTPERYSHRPGSDRGKLAIVSMSGRFPEAPSTDSFWDLLYKGLDVCKEVPLRRWDVKTHVDPSGKARNKGATRWGCWLDFAGEFDPRFFSISPKEAPQMDPAQRMALMSTYEAMERGGIVPDTTPSTQRNRIGVFHGVTSNDWMETNTAQNIDTYFITGGNRGFIPGRINFCFEFSGPSYSNDTACSSSLAAIHLACNSLWRGDCDTAVAGGTNMIFTPDGHTGLDKGFFLSRTGNCKAFDDAADGYCRAEGVGTVFIKRLEDALAENDPILATILDIKTNHSAMSDSMTRPFKPAQIDNMSALLSTAGISPLDLSYIEMHGTGTQVGDAVEMESVLSLFAPDETFRPRDKPLYVGSAKANIGHGEGVSGVTSLIKVLLMMKNDTIPPHCGIKPGSRINRNYPDLPARNVHIAFEPKPWPRTDTPRRVLINNFSAAGGNTAVLVEDAPVRDPVTASDPRTSHIVTVSGHVGKSLKLNLEKLRDHLVKRPEINPSELSYTTTARRWHHPHRVSITGANTMEILRNVESAIARGHGVNRPATKPKIVIACSGQGSQYTGMGWQLYNSYPTFRSDLERFDQLARSYGFPSFLEVYTSKPVGDSMEDLLPVIVQLALVSLEMALGNLLGSFGLKPSAVIGHSLGEYAALYISGVLSAADTLYLVGMRAKLLQERCQRGTHAMLAVRASPVTLCEVLAESNCEVACHNGPNDTVLSGPLKEVMNLQNSLSATGIKGTLLKLPFAFHSAQVQPILEEFKNVARGVTFHKPQIPVLSPLLVKVIDEKGTVDPVYLARHCREPVKMVSVLEHARDQHIITDRTIVIDVGPKALMAGMIKTTLDKDTSSALPTLGPSLDVWKSLTNILGTLYSRGLDINWVAYHEPFGSAKKVIELPSYGWDLKDYFIPYKGEWCLHRHEIRCSCATPGKETATSDYQLPSDEQVAAKRPSKQDESKEAYPEIVATTTVHRVVEEKTEPLGATLVVETDISRPDVNQIAQGHLVDGIPLCTPSVYADIALHVGRYSMNRLRASHPGAMDGVVDVADMVIDKALIPHGKSPQLLRTTLTMTWPPKAAATTRSAKIKFATYFADGKLDTEHATCTVRFTSEAQLKSLQKKVPEYQERIKKLGEGLRQGQFIRYTTKSGYKLMSSMASFHRDYKLLNHLILNEADNEAVSTMDFSAAKSEGTFAAHPAYVDAITQVGGFAMNANDNTDIQQEVFVNHGWDSFQVYQPLVKGKTYEVYVRMTEDEKGDLVHGDTIVLYGDAVVAFFKGLSLRRVPRRGLRMVLQQASDKAARLHGNQQAVKTQAPQRAALKQKPQSSPTQPHASKVAYSRSATSPTAGKPVVAARDLSREGDDKFKAVLSVISEESGVALGELTADTNFADIGIDSLSSMVIGSRLREDLGLELGAEFSLFIDCPTVRSLKTLLSGSAVSVNNDKDELEPGQEAETAAPEQLDLRIGDAAPSKVRDANIEPLDLGDELFRNVLRIVSEESGVALDELSAETVFADIGIDSLSSMVITSRFREDLGMSLDSSFNLFEEVPTVARLQEFFGTTSGSTTGSSGSGSSEDETDSIPSTPEEYTTADTRVPECRPTTSVVLQGLPQMAKQILFMLPDGGGSASSYLTIPRLHADVAIVGLNCPYARDPENMNCTHQSMIQSFCNEIKRRQPEGPYHLGGWSSGGAFAYVTAEALINAGNEVHSLIIIDAPVPQVMEKLPTSFYEYCNNLGLFSNQPGGTTDGTAQPPPYLIPHFQATVDVMLDYRVAPLKTNRMPKVGIIWASETVMDEDNAPKMKGMHFMVQKRKDFGPDGWDVVCPGAVFDIVRAEGANHFTLMTKEHVYLVRELIDRVMG</sequence>
<name>STCA_EMENI</name>
<comment type="function">
    <text evidence="1 7 8 9 11 12 13 14 16 21">Non-reducing polyketide synthase; part of the gene cluster that mediates the biosynthesis of sterigmatocystin (ST), a polyketide-derived furanocoumarin which is part of the most toxic and carcinogenic compounds among the known mycotoxins (PubMed:7642507, PubMed:8643646). The first step in the biosynthesis of sterigmatocystin is the production of hexanoate by the fatty acid synthase (FAS) units stcJ and stcK (PubMed:8962148). The polyketide backbone is assembled by the non-reducing polyketide synthase stcA by condensation of the starter hexanoyl-CoA and 7 malonyl-CoA extender units followed by cyclization and release of norsolorinic acid (By similarity). Norsolorinic acid is the first stable intermediate in the biosynthesis of sterigmatocystin and is converted into averantin (AVN) by the ketoreductase stcE which reduces the hexanoate ketone to an alcohol (Probable) (PubMed:8643646). Averantin is then oxidized into 5'-hydroxyaverantin (HAVN) by the cytochrome P450 monooxygenase stcF (PubMed:10618248). 5'-hydroxyaverantin is further converted to 5'-oxyaverantin (OAVN) by the 5'-hydroxyaverantin dehydrogenase stcG (PubMed:24957370). The next step is the conversion of OAVN into averufin (AVF) which is catalyzed by a yet to be identified enzyme (PubMed:24957370). The cytochrome P450 monooxygenase stcB and the flavin-binding monooxygenase stcW are both required for the conversion of averufin to 1-hydroxyversicolorone (PubMed:10618248). The esterase stcI probably catalyzes the formation of versiconal hemiacetal acetate from 1-hydroxyversicolorone (PubMed:24957370). The oxydoreductase stcN then probably catalyzes the biosynthetic step from versiconal to versicolorin B (VERB) (PubMed:24957370). The next step is performed by the versicolorin B desaturase stcL to produce versicolorin A (VERA) (PubMed:8999832). The ketoreductase stcU and the cytochrome P450 monooxygenase stcS are involved in the conversion of versicolorin A to demethylsterigmatocystin (PubMed:7486998). The Baeyer-Villiger oxidas stcQ and the reductase stcR might be involved in the biosynthetic step from versicolorin A to demethylsterigmatocystin (PubMed:24957370). The final step in the biosynthesis of sterigmatocystin is the methylation of demethylsterigmatocystin catalyzed by the methyltransferase stcP (PubMed:8900026).</text>
</comment>
<comment type="catalytic activity">
    <reaction evidence="1">
        <text>hexanoyl-[ACP] + 7 malonyl-CoA + 6 H(+) = noranthrone + holo-[ACP] + 7 CO2 + 7 CoA + 2 H2O</text>
        <dbReference type="Rhea" id="RHEA:35179"/>
        <dbReference type="Rhea" id="RHEA-COMP:9632"/>
        <dbReference type="Rhea" id="RHEA-COMP:9685"/>
        <dbReference type="ChEBI" id="CHEBI:15377"/>
        <dbReference type="ChEBI" id="CHEBI:15378"/>
        <dbReference type="ChEBI" id="CHEBI:16526"/>
        <dbReference type="ChEBI" id="CHEBI:57287"/>
        <dbReference type="ChEBI" id="CHEBI:57384"/>
        <dbReference type="ChEBI" id="CHEBI:64479"/>
        <dbReference type="ChEBI" id="CHEBI:77904"/>
        <dbReference type="ChEBI" id="CHEBI:78459"/>
        <dbReference type="EC" id="2.3.1.221"/>
    </reaction>
</comment>
<comment type="cofactor">
    <cofactor evidence="19">
        <name>pantetheine 4'-phosphate</name>
        <dbReference type="ChEBI" id="CHEBI:47942"/>
    </cofactor>
    <text evidence="19">Binds 2 phosphopantetheines covalently.</text>
</comment>
<comment type="pathway">
    <text evidence="9 11">Mycotoxin biosynthesis; sterigmatocystin biosynthesis.</text>
</comment>
<comment type="induction">
    <text evidence="10 11 15">The genes forming the sterigmatocystin biosynthesis cluster are co-regulated and induced on oatmeal porridge or the fungal isolates were grown either on oatmeal porridge or in YEC medium (0.2% yeast extract, 5.0% corn steep liquor) (PubMed:8017929, PubMed:8643646). Expression is positively regulated by the cluster-specific transcription factor aflR that binds the palindromic sequence 5'-TCG(N5)CGA-3'found in the promoter (PubMed:9680223).</text>
</comment>
<comment type="domain">
    <text evidence="1">The domain architecture includes a starter unit:ACP transacylase (SAT) domain, a beta-ketoacyl synthase (KS) domain, a malonyl-CoA:ACP transacylase (MAT) domain, a product template (PT) domain, 2 acyl-carrier (ACP) domains, and a thioesterase/Claisen cyclase (TE/CLC) domain (By similarity). The SAT domain receives a C6-fatty acid starter unit and transfers it onto the ACP for chain elongation. The KS accepts the hexanoyl-ACP unit and subsequent malonate extender units are loaded onto the ACP from the MAT domain for chain extension to generate the linear poly-beta-keto ACP-bound intermediate. The linear intermediate is then cyclized and aromatized in the PT domain. The resulting bicyclic intermediate is ultimately transferred from the ACP to the TE/CLC domain and undergoes Claisen-type C-C bond cyclization to release the product norsolorinic acid anthrone (noranthrone), which spontaneously oxidizes in vitro to norsolorinic acid (By similarity).</text>
</comment>
<comment type="disruption phenotype">
    <text evidence="9">Blocks production of sterigmatocystin and all sterigmatocystin intermediate substrates but does not affect transcription of the pathway genes.</text>
</comment>
<comment type="sequence caution" evidence="19">
    <conflict type="erroneous gene model prediction">
        <sequence resource="EMBL-CDS" id="AAA81586"/>
    </conflict>
</comment>
<comment type="sequence caution" evidence="19">
    <conflict type="erroneous gene model prediction">
        <sequence resource="EMBL-CDS" id="AAC49191"/>
    </conflict>
</comment>
<comment type="sequence caution" evidence="19">
    <conflict type="erroneous gene model prediction">
        <sequence resource="EMBL-CDS" id="EAA61613"/>
    </conflict>
</comment>
<reference key="1">
    <citation type="journal article" date="1995" name="J. Bacteriol.">
        <title>Sterigmatocystin biosynthesis in Aspergillus nidulans requires a novel type I polyketide synthase.</title>
        <authorList>
            <person name="Yu J.-H."/>
            <person name="Leonard T.J."/>
        </authorList>
    </citation>
    <scope>NUCLEOTIDE SEQUENCE [GENOMIC DNA]</scope>
    <scope>DOMAIN</scope>
    <scope>DISRUPTION PHENOTYPE</scope>
    <scope>FUNCTION</scope>
    <scope>PATHWAY</scope>
    <source>
        <strain>FGSC A4 / ATCC 38163 / CBS 112.46 / NRRL 194 / M139</strain>
    </source>
</reference>
<reference key="2">
    <citation type="journal article" date="1996" name="Proc. Natl. Acad. Sci. U.S.A.">
        <title>Twenty-five coregulated transcripts define a sterigmatocystin gene cluster in Aspergillus nidulans.</title>
        <authorList>
            <person name="Brown D.W."/>
            <person name="Yu J.-H."/>
            <person name="Kelkar H.S."/>
            <person name="Fernandes M."/>
            <person name="Nesbitt T.C."/>
            <person name="Keller N.P."/>
            <person name="Adams T.H."/>
            <person name="Leonard T.J."/>
        </authorList>
    </citation>
    <scope>NUCLEOTIDE SEQUENCE [GENOMIC DNA]</scope>
    <scope>INDUCTION</scope>
    <scope>FUNCTION</scope>
    <scope>PATHWAY</scope>
    <source>
        <strain>FGSC 26</strain>
    </source>
</reference>
<reference key="3">
    <citation type="journal article" date="2005" name="Nature">
        <title>Sequencing of Aspergillus nidulans and comparative analysis with A. fumigatus and A. oryzae.</title>
        <authorList>
            <person name="Galagan J.E."/>
            <person name="Calvo S.E."/>
            <person name="Cuomo C."/>
            <person name="Ma L.-J."/>
            <person name="Wortman J.R."/>
            <person name="Batzoglou S."/>
            <person name="Lee S.-I."/>
            <person name="Bastuerkmen M."/>
            <person name="Spevak C.C."/>
            <person name="Clutterbuck J."/>
            <person name="Kapitonov V."/>
            <person name="Jurka J."/>
            <person name="Scazzocchio C."/>
            <person name="Farman M.L."/>
            <person name="Butler J."/>
            <person name="Purcell S."/>
            <person name="Harris S."/>
            <person name="Braus G.H."/>
            <person name="Draht O."/>
            <person name="Busch S."/>
            <person name="D'Enfert C."/>
            <person name="Bouchier C."/>
            <person name="Goldman G.H."/>
            <person name="Bell-Pedersen D."/>
            <person name="Griffiths-Jones S."/>
            <person name="Doonan J.H."/>
            <person name="Yu J."/>
            <person name="Vienken K."/>
            <person name="Pain A."/>
            <person name="Freitag M."/>
            <person name="Selker E.U."/>
            <person name="Archer D.B."/>
            <person name="Penalva M.A."/>
            <person name="Oakley B.R."/>
            <person name="Momany M."/>
            <person name="Tanaka T."/>
            <person name="Kumagai T."/>
            <person name="Asai K."/>
            <person name="Machida M."/>
            <person name="Nierman W.C."/>
            <person name="Denning D.W."/>
            <person name="Caddick M.X."/>
            <person name="Hynes M."/>
            <person name="Paoletti M."/>
            <person name="Fischer R."/>
            <person name="Miller B.L."/>
            <person name="Dyer P.S."/>
            <person name="Sachs M.S."/>
            <person name="Osmani S.A."/>
            <person name="Birren B.W."/>
        </authorList>
    </citation>
    <scope>NUCLEOTIDE SEQUENCE [LARGE SCALE GENOMIC DNA]</scope>
    <source>
        <strain>FGSC A4 / ATCC 38163 / CBS 112.46 / NRRL 194 / M139</strain>
    </source>
</reference>
<reference key="4">
    <citation type="journal article" date="2009" name="Fungal Genet. Biol.">
        <title>The 2008 update of the Aspergillus nidulans genome annotation: a community effort.</title>
        <authorList>
            <person name="Wortman J.R."/>
            <person name="Gilsenan J.M."/>
            <person name="Joardar V."/>
            <person name="Deegan J."/>
            <person name="Clutterbuck J."/>
            <person name="Andersen M.R."/>
            <person name="Archer D."/>
            <person name="Bencina M."/>
            <person name="Braus G."/>
            <person name="Coutinho P."/>
            <person name="von Dohren H."/>
            <person name="Doonan J."/>
            <person name="Driessen A.J."/>
            <person name="Durek P."/>
            <person name="Espeso E."/>
            <person name="Fekete E."/>
            <person name="Flipphi M."/>
            <person name="Estrada C.G."/>
            <person name="Geysens S."/>
            <person name="Goldman G."/>
            <person name="de Groot P.W."/>
            <person name="Hansen K."/>
            <person name="Harris S.D."/>
            <person name="Heinekamp T."/>
            <person name="Helmstaedt K."/>
            <person name="Henrissat B."/>
            <person name="Hofmann G."/>
            <person name="Homan T."/>
            <person name="Horio T."/>
            <person name="Horiuchi H."/>
            <person name="James S."/>
            <person name="Jones M."/>
            <person name="Karaffa L."/>
            <person name="Karanyi Z."/>
            <person name="Kato M."/>
            <person name="Keller N."/>
            <person name="Kelly D.E."/>
            <person name="Kiel J.A."/>
            <person name="Kim J.M."/>
            <person name="van der Klei I.J."/>
            <person name="Klis F.M."/>
            <person name="Kovalchuk A."/>
            <person name="Krasevec N."/>
            <person name="Kubicek C.P."/>
            <person name="Liu B."/>
            <person name="Maccabe A."/>
            <person name="Meyer V."/>
            <person name="Mirabito P."/>
            <person name="Miskei M."/>
            <person name="Mos M."/>
            <person name="Mullins J."/>
            <person name="Nelson D.R."/>
            <person name="Nielsen J."/>
            <person name="Oakley B.R."/>
            <person name="Osmani S.A."/>
            <person name="Pakula T."/>
            <person name="Paszewski A."/>
            <person name="Paulsen I."/>
            <person name="Pilsyk S."/>
            <person name="Pocsi I."/>
            <person name="Punt P.J."/>
            <person name="Ram A.F."/>
            <person name="Ren Q."/>
            <person name="Robellet X."/>
            <person name="Robson G."/>
            <person name="Seiboth B."/>
            <person name="van Solingen P."/>
            <person name="Specht T."/>
            <person name="Sun J."/>
            <person name="Taheri-Talesh N."/>
            <person name="Takeshita N."/>
            <person name="Ussery D."/>
            <person name="vanKuyk P.A."/>
            <person name="Visser H."/>
            <person name="van de Vondervoort P.J."/>
            <person name="de Vries R.P."/>
            <person name="Walton J."/>
            <person name="Xiang X."/>
            <person name="Xiong Y."/>
            <person name="Zeng A.P."/>
            <person name="Brandt B.W."/>
            <person name="Cornell M.J."/>
            <person name="van den Hondel C.A."/>
            <person name="Visser J."/>
            <person name="Oliver S.G."/>
            <person name="Turner G."/>
        </authorList>
    </citation>
    <scope>GENOME REANNOTATION</scope>
    <source>
        <strain>FGSC A4 / ATCC 38163 / CBS 112.46 / NRRL 194 / M139</strain>
    </source>
</reference>
<reference key="5">
    <citation type="journal article" date="1994" name="Appl. Environ. Microbiol.">
        <title>Aspergillus nidulans verA is required for production of the mycotoxin sterigmatocystin.</title>
        <authorList>
            <person name="Keller N.P."/>
            <person name="Kantz N.J."/>
            <person name="Adams T.H."/>
        </authorList>
    </citation>
    <scope>FUNCTION</scope>
    <scope>INDUCTION</scope>
</reference>
<reference key="6">
    <citation type="journal article" date="1995" name="Appl. Environ. Microbiol.">
        <title>StcS, a putative P-450 monooxygenase, is required for the conversion of versicolorin A to sterigmatocystin in Aspergillus nidulans.</title>
        <authorList>
            <person name="Keller N.P."/>
            <person name="Segner S."/>
            <person name="Bhatnagar D."/>
            <person name="Adams T.H."/>
        </authorList>
    </citation>
    <scope>FUNCTION</scope>
</reference>
<reference key="7">
    <citation type="journal article" date="1996" name="Appl. Environ. Microbiol.">
        <title>Aspergillus nidulans stcP encodes an O-methyltransferase that is required for sterigmatocystin biosynthesis.</title>
        <authorList>
            <person name="Kelkar H.S."/>
            <person name="Keller N.P."/>
            <person name="Adams T.H."/>
        </authorList>
    </citation>
    <scope>FUNCTION</scope>
</reference>
<reference key="8">
    <citation type="journal article" date="1996" name="Proc. Natl. Acad. Sci. U.S.A.">
        <title>Aspergillus has distinct fatty acid synthases for primary and secondary metabolism.</title>
        <authorList>
            <person name="Brown D.W."/>
            <person name="Adams T.H."/>
            <person name="Keller N.P."/>
        </authorList>
    </citation>
    <scope>FUNCTION</scope>
</reference>
<reference key="9">
    <citation type="journal article" date="1997" name="J. Biol. Chem.">
        <title>Aspergillus nidulans stcL encodes a putative cytochrome P-450 monooxygenase required for bisfuran desaturation during aflatoxin/sterigmatocystin biosynthesis.</title>
        <authorList>
            <person name="Kelkar H.S."/>
            <person name="Skloss T.W."/>
            <person name="Haw J.F."/>
            <person name="Keller N.P."/>
            <person name="Adams T.H."/>
        </authorList>
    </citation>
    <scope>FUNCTION</scope>
</reference>
<reference key="10">
    <citation type="journal article" date="1998" name="Mol. Microbiol.">
        <title>Sequence-specific binding by Aspergillus nidulans aflR, a C6 zinc cluster protein regulating mycotoxin biosynthesis.</title>
        <authorList>
            <person name="Fernandes M."/>
            <person name="Keller N.P."/>
            <person name="Adams T.H."/>
        </authorList>
    </citation>
    <scope>INDUCTION</scope>
</reference>
<reference key="11">
    <citation type="journal article" date="2000" name="Appl. Environ. Microbiol.">
        <title>Requirement of monooxygenase-mediated steps for sterigmatocystin biosynthesis by Aspergillus nidulans.</title>
        <authorList>
            <person name="Keller N.P."/>
            <person name="Watanabe C.M."/>
            <person name="Kelkar H.S."/>
            <person name="Adams T.H."/>
            <person name="Townsend C.A."/>
        </authorList>
    </citation>
    <scope>FUNCTION</scope>
</reference>
<reference key="12">
    <citation type="journal article" date="2012" name="Metabolites">
        <title>Genetics of polyketide metabolism in Aspergillus nidulans.</title>
        <authorList>
            <person name="Klejnstrup M.L."/>
            <person name="Frandsen R.J."/>
            <person name="Holm D.K."/>
            <person name="Nielsen M.T."/>
            <person name="Mortensen U.H."/>
            <person name="Larsen T.O."/>
            <person name="Nielsen J.B."/>
        </authorList>
    </citation>
    <scope>REVIEW ON STERIGMATOCYSTIN BIOSYNTHESIS</scope>
</reference>
<gene>
    <name evidence="18" type="primary">stcA</name>
    <name evidence="17" type="synonym">pksST</name>
    <name type="ORF">AN7825</name>
</gene>
<protein>
    <recommendedName>
        <fullName evidence="1">Norsolorinic acid synthase stcA</fullName>
        <shortName evidence="1">NSAS</shortName>
        <ecNumber evidence="1">2.3.1.221</ecNumber>
    </recommendedName>
    <alternativeName>
        <fullName evidence="18">Non-reducing polyketide synthase stcA</fullName>
    </alternativeName>
    <alternativeName>
        <fullName evidence="18">Sterigmatocystin biosynthesis cluster protein A</fullName>
    </alternativeName>
    <alternativeName>
        <fullName evidence="17">Sterigmatocystin biosynthesis polyketide synthase</fullName>
    </alternativeName>
</protein>
<evidence type="ECO:0000250" key="1">
    <source>
        <dbReference type="UniProtKB" id="Q12053"/>
    </source>
</evidence>
<evidence type="ECO:0000255" key="2"/>
<evidence type="ECO:0000255" key="3">
    <source>
        <dbReference type="PROSITE-ProRule" id="PRU00258"/>
    </source>
</evidence>
<evidence type="ECO:0000255" key="4">
    <source>
        <dbReference type="PROSITE-ProRule" id="PRU01348"/>
    </source>
</evidence>
<evidence type="ECO:0000255" key="5">
    <source>
        <dbReference type="PROSITE-ProRule" id="PRU01363"/>
    </source>
</evidence>
<evidence type="ECO:0000256" key="6">
    <source>
        <dbReference type="SAM" id="MobiDB-lite"/>
    </source>
</evidence>
<evidence type="ECO:0000269" key="7">
    <source>
    </source>
</evidence>
<evidence type="ECO:0000269" key="8">
    <source>
    </source>
</evidence>
<evidence type="ECO:0000269" key="9">
    <source>
    </source>
</evidence>
<evidence type="ECO:0000269" key="10">
    <source>
    </source>
</evidence>
<evidence type="ECO:0000269" key="11">
    <source>
    </source>
</evidence>
<evidence type="ECO:0000269" key="12">
    <source>
    </source>
</evidence>
<evidence type="ECO:0000269" key="13">
    <source>
    </source>
</evidence>
<evidence type="ECO:0000269" key="14">
    <source>
    </source>
</evidence>
<evidence type="ECO:0000269" key="15">
    <source>
    </source>
</evidence>
<evidence type="ECO:0000303" key="16">
    <source>
    </source>
</evidence>
<evidence type="ECO:0000303" key="17">
    <source>
    </source>
</evidence>
<evidence type="ECO:0000303" key="18">
    <source>
    </source>
</evidence>
<evidence type="ECO:0000305" key="19"/>
<evidence type="ECO:0000305" key="20">
    <source>
    </source>
</evidence>
<evidence type="ECO:0000305" key="21">
    <source>
    </source>
</evidence>
<feature type="chain" id="PRO_0000180304" description="Norsolorinic acid synthase stcA">
    <location>
        <begin position="1"/>
        <end position="2211"/>
    </location>
</feature>
<feature type="domain" description="Ketosynthase family 3 (KS3)" evidence="4 20">
    <location>
        <begin position="380"/>
        <end position="812"/>
    </location>
</feature>
<feature type="domain" description="PKS/mFAS DH" evidence="5">
    <location>
        <begin position="1327"/>
        <end position="1643"/>
    </location>
</feature>
<feature type="domain" description="Carrier 1" evidence="3">
    <location>
        <begin position="1712"/>
        <end position="1791"/>
    </location>
</feature>
<feature type="domain" description="Carrier 2" evidence="3">
    <location>
        <begin position="1839"/>
        <end position="1915"/>
    </location>
</feature>
<feature type="region of interest" description="Starter unit:ACP transacylase (SAT) domain" evidence="2 20">
    <location>
        <begin position="11"/>
        <end position="251"/>
    </location>
</feature>
<feature type="region of interest" description="Disordered" evidence="6">
    <location>
        <begin position="358"/>
        <end position="378"/>
    </location>
</feature>
<feature type="region of interest" description="Malonyl-CoA:ACP transacylase (MAT) domain" evidence="2 20">
    <location>
        <begin position="912"/>
        <end position="1201"/>
    </location>
</feature>
<feature type="region of interest" description="Disordered" evidence="6">
    <location>
        <begin position="1289"/>
        <end position="1316"/>
    </location>
</feature>
<feature type="region of interest" description="N-terminal hotdog fold" evidence="5">
    <location>
        <begin position="1327"/>
        <end position="1468"/>
    </location>
</feature>
<feature type="region of interest" description="Product template (PT) domain" evidence="2 20">
    <location>
        <begin position="1340"/>
        <end position="1643"/>
    </location>
</feature>
<feature type="region of interest" description="C-terminal hotdog fold" evidence="5">
    <location>
        <begin position="1495"/>
        <end position="1643"/>
    </location>
</feature>
<feature type="region of interest" description="Disordered" evidence="6">
    <location>
        <begin position="1655"/>
        <end position="1706"/>
    </location>
</feature>
<feature type="region of interest" description="Disordered" evidence="6">
    <location>
        <begin position="1912"/>
        <end position="1947"/>
    </location>
</feature>
<feature type="region of interest" description="Thioesterase/Claisen cyclase (TE/CLC) domain" evidence="2 20">
    <location>
        <begin position="1969"/>
        <end position="2205"/>
    </location>
</feature>
<feature type="compositionally biased region" description="Basic and acidic residues" evidence="6">
    <location>
        <begin position="368"/>
        <end position="378"/>
    </location>
</feature>
<feature type="compositionally biased region" description="Polar residues" evidence="6">
    <location>
        <begin position="1658"/>
        <end position="1668"/>
    </location>
</feature>
<feature type="compositionally biased region" description="Polar residues" evidence="6">
    <location>
        <begin position="1676"/>
        <end position="1685"/>
    </location>
</feature>
<feature type="compositionally biased region" description="Low complexity" evidence="6">
    <location>
        <begin position="1912"/>
        <end position="1926"/>
    </location>
</feature>
<feature type="compositionally biased region" description="Polar residues" evidence="6">
    <location>
        <begin position="1934"/>
        <end position="1945"/>
    </location>
</feature>
<feature type="active site" description="For beta-ketoacyl synthase activity" evidence="4">
    <location>
        <position position="552"/>
    </location>
</feature>
<feature type="active site" description="For beta-ketoacyl synthase activity" evidence="4">
    <location>
        <position position="687"/>
    </location>
</feature>
<feature type="active site" description="For beta-ketoacyl synthase activity" evidence="4">
    <location>
        <position position="730"/>
    </location>
</feature>
<feature type="active site" description="For acyl/malonyl transferase activity" evidence="1">
    <location>
        <position position="1004"/>
    </location>
</feature>
<feature type="active site" description="Proton acceptor; for dehydratase activity" evidence="5">
    <location>
        <position position="1359"/>
    </location>
</feature>
<feature type="active site" description="Proton donor; for dehydratase activity" evidence="5">
    <location>
        <position position="1555"/>
    </location>
</feature>
<feature type="active site" description="For thioesterase activity" evidence="1">
    <location>
        <position position="2039"/>
    </location>
</feature>
<feature type="modified residue" description="O-(pantetheine 4'-phosphoryl)serine" evidence="3">
    <location>
        <position position="1749"/>
    </location>
</feature>
<feature type="modified residue" description="O-(pantetheine 4'-phosphoryl)serine" evidence="3">
    <location>
        <position position="1873"/>
    </location>
</feature>
<feature type="sequence conflict" description="In Ref. 1; AAA81586 and 2; AAC49191." evidence="19" ref="1 2">
    <original>D</original>
    <variation>T</variation>
    <location>
        <position position="1584"/>
    </location>
</feature>
<feature type="sequence conflict" description="In Ref. 1; AAA81586 and 2; AAC49191." evidence="19" ref="1 2">
    <original>E</original>
    <variation>A</variation>
    <location>
        <position position="1940"/>
    </location>
</feature>
<feature type="sequence conflict" description="In Ref. 1; AAA81586 and 2; AAC49191." evidence="19" ref="1 2">
    <original>K</original>
    <variation>W</variation>
    <location>
        <position position="2164"/>
    </location>
</feature>
<feature type="sequence conflict" description="In Ref. 1; AAA81586 and 2; AAC49191." evidence="19" ref="1 2">
    <original>V</original>
    <variation>L</variation>
    <location>
        <position position="2183"/>
    </location>
</feature>
<proteinExistence type="evidence at transcript level"/>
<organism>
    <name type="scientific">Emericella nidulans (strain FGSC A4 / ATCC 38163 / CBS 112.46 / NRRL 194 / M139)</name>
    <name type="common">Aspergillus nidulans</name>
    <dbReference type="NCBI Taxonomy" id="227321"/>
    <lineage>
        <taxon>Eukaryota</taxon>
        <taxon>Fungi</taxon>
        <taxon>Dikarya</taxon>
        <taxon>Ascomycota</taxon>
        <taxon>Pezizomycotina</taxon>
        <taxon>Eurotiomycetes</taxon>
        <taxon>Eurotiomycetidae</taxon>
        <taxon>Eurotiales</taxon>
        <taxon>Aspergillaceae</taxon>
        <taxon>Aspergillus</taxon>
        <taxon>Aspergillus subgen. Nidulantes</taxon>
    </lineage>
</organism>
<dbReference type="EC" id="2.3.1.221" evidence="1"/>
<dbReference type="EMBL" id="L39121">
    <property type="protein sequence ID" value="AAA81586.1"/>
    <property type="status" value="ALT_SEQ"/>
    <property type="molecule type" value="Genomic_DNA"/>
</dbReference>
<dbReference type="EMBL" id="U34740">
    <property type="protein sequence ID" value="AAC49191.1"/>
    <property type="status" value="ALT_SEQ"/>
    <property type="molecule type" value="Genomic_DNA"/>
</dbReference>
<dbReference type="EMBL" id="AACD01000132">
    <property type="protein sequence ID" value="EAA61613.1"/>
    <property type="status" value="ALT_SEQ"/>
    <property type="molecule type" value="Genomic_DNA"/>
</dbReference>
<dbReference type="EMBL" id="BN001304">
    <property type="protein sequence ID" value="CBF80184.1"/>
    <property type="molecule type" value="Genomic_DNA"/>
</dbReference>
<dbReference type="RefSeq" id="XP_681094.1">
    <property type="nucleotide sequence ID" value="XM_676002.1"/>
</dbReference>
<dbReference type="SMR" id="Q12397"/>
<dbReference type="STRING" id="227321.Q12397"/>
<dbReference type="ESTHER" id="emeni-stca">
    <property type="family name" value="Thioesterase"/>
</dbReference>
<dbReference type="EnsemblFungi" id="CBF80184">
    <property type="protein sequence ID" value="CBF80184"/>
    <property type="gene ID" value="ANIA_07825"/>
</dbReference>
<dbReference type="VEuPathDB" id="FungiDB:AN7825"/>
<dbReference type="eggNOG" id="KOG1202">
    <property type="taxonomic scope" value="Eukaryota"/>
</dbReference>
<dbReference type="HOGENOM" id="CLU_000022_6_0_1"/>
<dbReference type="InParanoid" id="Q12397"/>
<dbReference type="OMA" id="KWGCWLD"/>
<dbReference type="OrthoDB" id="329835at2759"/>
<dbReference type="UniPathway" id="UPA00377"/>
<dbReference type="Proteomes" id="UP000000560">
    <property type="component" value="Chromosome IV"/>
</dbReference>
<dbReference type="GO" id="GO:0004312">
    <property type="term" value="F:fatty acid synthase activity"/>
    <property type="evidence" value="ECO:0000318"/>
    <property type="project" value="GO_Central"/>
</dbReference>
<dbReference type="GO" id="GO:0031177">
    <property type="term" value="F:phosphopantetheine binding"/>
    <property type="evidence" value="ECO:0007669"/>
    <property type="project" value="InterPro"/>
</dbReference>
<dbReference type="GO" id="GO:1900557">
    <property type="term" value="P:emericellamide biosynthetic process"/>
    <property type="evidence" value="ECO:0000315"/>
    <property type="project" value="AspGD"/>
</dbReference>
<dbReference type="GO" id="GO:0006633">
    <property type="term" value="P:fatty acid biosynthetic process"/>
    <property type="evidence" value="ECO:0000318"/>
    <property type="project" value="GO_Central"/>
</dbReference>
<dbReference type="GO" id="GO:1900815">
    <property type="term" value="P:monodictyphenone biosynthetic process"/>
    <property type="evidence" value="ECO:0000315"/>
    <property type="project" value="AspGD"/>
</dbReference>
<dbReference type="GO" id="GO:1900584">
    <property type="term" value="P:o-orsellinic acid biosynthetic process"/>
    <property type="evidence" value="ECO:0000315"/>
    <property type="project" value="AspGD"/>
</dbReference>
<dbReference type="GO" id="GO:0019748">
    <property type="term" value="P:secondary metabolic process"/>
    <property type="evidence" value="ECO:0000303"/>
    <property type="project" value="AspGD"/>
</dbReference>
<dbReference type="GO" id="GO:0044550">
    <property type="term" value="P:secondary metabolite biosynthetic process"/>
    <property type="evidence" value="ECO:0000318"/>
    <property type="project" value="GO_Central"/>
</dbReference>
<dbReference type="GO" id="GO:0045461">
    <property type="term" value="P:sterigmatocystin biosynthetic process"/>
    <property type="evidence" value="ECO:0000315"/>
    <property type="project" value="AspGD"/>
</dbReference>
<dbReference type="CDD" id="cd00833">
    <property type="entry name" value="PKS"/>
    <property type="match status" value="1"/>
</dbReference>
<dbReference type="FunFam" id="1.10.1200.10:FF:000011">
    <property type="entry name" value="Sterigmatocystin biosynthesis polyketide synthase"/>
    <property type="match status" value="2"/>
</dbReference>
<dbReference type="FunFam" id="3.10.129.110:FF:000001">
    <property type="entry name" value="Sterigmatocystin biosynthesis polyketide synthase"/>
    <property type="match status" value="1"/>
</dbReference>
<dbReference type="FunFam" id="3.40.47.10:FF:000031">
    <property type="entry name" value="Sterigmatocystin biosynthesis polyketide synthase"/>
    <property type="match status" value="1"/>
</dbReference>
<dbReference type="FunFam" id="3.40.50.1820:FF:000116">
    <property type="entry name" value="Sterigmatocystin biosynthesis polyketide synthase"/>
    <property type="match status" value="1"/>
</dbReference>
<dbReference type="Gene3D" id="3.30.70.3290">
    <property type="match status" value="1"/>
</dbReference>
<dbReference type="Gene3D" id="3.40.47.10">
    <property type="match status" value="1"/>
</dbReference>
<dbReference type="Gene3D" id="1.10.1200.10">
    <property type="entry name" value="ACP-like"/>
    <property type="match status" value="2"/>
</dbReference>
<dbReference type="Gene3D" id="3.40.50.1820">
    <property type="entry name" value="alpha/beta hydrolase"/>
    <property type="match status" value="1"/>
</dbReference>
<dbReference type="Gene3D" id="3.30.70.250">
    <property type="entry name" value="Malonyl-CoA ACP transacylase, ACP-binding"/>
    <property type="match status" value="1"/>
</dbReference>
<dbReference type="Gene3D" id="3.40.366.10">
    <property type="entry name" value="Malonyl-Coenzyme A Acyl Carrier Protein, domain 2"/>
    <property type="match status" value="2"/>
</dbReference>
<dbReference type="Gene3D" id="3.10.129.110">
    <property type="entry name" value="Polyketide synthase dehydratase"/>
    <property type="match status" value="1"/>
</dbReference>
<dbReference type="InterPro" id="IPR029058">
    <property type="entry name" value="AB_hydrolase_fold"/>
</dbReference>
<dbReference type="InterPro" id="IPR001227">
    <property type="entry name" value="Ac_transferase_dom_sf"/>
</dbReference>
<dbReference type="InterPro" id="IPR036736">
    <property type="entry name" value="ACP-like_sf"/>
</dbReference>
<dbReference type="InterPro" id="IPR014043">
    <property type="entry name" value="Acyl_transferase_dom"/>
</dbReference>
<dbReference type="InterPro" id="IPR016035">
    <property type="entry name" value="Acyl_Trfase/lysoPLipase"/>
</dbReference>
<dbReference type="InterPro" id="IPR014031">
    <property type="entry name" value="Ketoacyl_synth_C"/>
</dbReference>
<dbReference type="InterPro" id="IPR014030">
    <property type="entry name" value="Ketoacyl_synth_N"/>
</dbReference>
<dbReference type="InterPro" id="IPR016036">
    <property type="entry name" value="Malonyl_transacylase_ACP-bd"/>
</dbReference>
<dbReference type="InterPro" id="IPR020841">
    <property type="entry name" value="PKS_Beta-ketoAc_synthase_dom"/>
</dbReference>
<dbReference type="InterPro" id="IPR042104">
    <property type="entry name" value="PKS_dehydratase_sf"/>
</dbReference>
<dbReference type="InterPro" id="IPR049551">
    <property type="entry name" value="PKS_DH_C"/>
</dbReference>
<dbReference type="InterPro" id="IPR049900">
    <property type="entry name" value="PKS_mFAS_DH"/>
</dbReference>
<dbReference type="InterPro" id="IPR050091">
    <property type="entry name" value="PKS_NRPS_Biosynth_Enz"/>
</dbReference>
<dbReference type="InterPro" id="IPR020806">
    <property type="entry name" value="PKS_PP-bd"/>
</dbReference>
<dbReference type="InterPro" id="IPR009081">
    <property type="entry name" value="PP-bd_ACP"/>
</dbReference>
<dbReference type="InterPro" id="IPR030918">
    <property type="entry name" value="PT_fungal_PKS"/>
</dbReference>
<dbReference type="InterPro" id="IPR032088">
    <property type="entry name" value="SAT"/>
</dbReference>
<dbReference type="InterPro" id="IPR001031">
    <property type="entry name" value="Thioesterase"/>
</dbReference>
<dbReference type="InterPro" id="IPR016039">
    <property type="entry name" value="Thiolase-like"/>
</dbReference>
<dbReference type="NCBIfam" id="TIGR04532">
    <property type="entry name" value="PT_fungal_PKS"/>
    <property type="match status" value="1"/>
</dbReference>
<dbReference type="PANTHER" id="PTHR43775">
    <property type="entry name" value="FATTY ACID SYNTHASE"/>
    <property type="match status" value="1"/>
</dbReference>
<dbReference type="PANTHER" id="PTHR43775:SF40">
    <property type="entry name" value="NORSOLORINIC ACID SYNTHASE STCA"/>
    <property type="match status" value="1"/>
</dbReference>
<dbReference type="Pfam" id="PF00698">
    <property type="entry name" value="Acyl_transf_1"/>
    <property type="match status" value="1"/>
</dbReference>
<dbReference type="Pfam" id="PF22621">
    <property type="entry name" value="CurL-like_PKS_C"/>
    <property type="match status" value="1"/>
</dbReference>
<dbReference type="Pfam" id="PF00109">
    <property type="entry name" value="ketoacyl-synt"/>
    <property type="match status" value="1"/>
</dbReference>
<dbReference type="Pfam" id="PF02801">
    <property type="entry name" value="Ketoacyl-synt_C"/>
    <property type="match status" value="1"/>
</dbReference>
<dbReference type="Pfam" id="PF00550">
    <property type="entry name" value="PP-binding"/>
    <property type="match status" value="2"/>
</dbReference>
<dbReference type="Pfam" id="PF14765">
    <property type="entry name" value="PS-DH"/>
    <property type="match status" value="1"/>
</dbReference>
<dbReference type="Pfam" id="PF16073">
    <property type="entry name" value="SAT"/>
    <property type="match status" value="1"/>
</dbReference>
<dbReference type="Pfam" id="PF00975">
    <property type="entry name" value="Thioesterase"/>
    <property type="match status" value="1"/>
</dbReference>
<dbReference type="SMART" id="SM00827">
    <property type="entry name" value="PKS_AT"/>
    <property type="match status" value="1"/>
</dbReference>
<dbReference type="SMART" id="SM00825">
    <property type="entry name" value="PKS_KS"/>
    <property type="match status" value="1"/>
</dbReference>
<dbReference type="SMART" id="SM00823">
    <property type="entry name" value="PKS_PP"/>
    <property type="match status" value="2"/>
</dbReference>
<dbReference type="SUPFAM" id="SSF47336">
    <property type="entry name" value="ACP-like"/>
    <property type="match status" value="2"/>
</dbReference>
<dbReference type="SUPFAM" id="SSF53474">
    <property type="entry name" value="alpha/beta-Hydrolases"/>
    <property type="match status" value="1"/>
</dbReference>
<dbReference type="SUPFAM" id="SSF52151">
    <property type="entry name" value="FabD/lysophospholipase-like"/>
    <property type="match status" value="1"/>
</dbReference>
<dbReference type="SUPFAM" id="SSF55048">
    <property type="entry name" value="Probable ACP-binding domain of malonyl-CoA ACP transacylase"/>
    <property type="match status" value="1"/>
</dbReference>
<dbReference type="SUPFAM" id="SSF53901">
    <property type="entry name" value="Thiolase-like"/>
    <property type="match status" value="1"/>
</dbReference>
<dbReference type="PROSITE" id="PS50075">
    <property type="entry name" value="CARRIER"/>
    <property type="match status" value="2"/>
</dbReference>
<dbReference type="PROSITE" id="PS52004">
    <property type="entry name" value="KS3_2"/>
    <property type="match status" value="1"/>
</dbReference>
<dbReference type="PROSITE" id="PS52019">
    <property type="entry name" value="PKS_MFAS_DH"/>
    <property type="match status" value="1"/>
</dbReference>
<keyword id="KW-0012">Acyltransferase</keyword>
<keyword id="KW-0511">Multifunctional enzyme</keyword>
<keyword id="KW-0596">Phosphopantetheine</keyword>
<keyword id="KW-0597">Phosphoprotein</keyword>
<keyword id="KW-1185">Reference proteome</keyword>
<keyword id="KW-0677">Repeat</keyword>
<keyword id="KW-0808">Transferase</keyword>
<keyword id="KW-0843">Virulence</keyword>
<accession>Q12397</accession>
<accession>C8VDU9</accession>
<accession>Q5AV55</accession>